<accession>Q0HG46</accession>
<gene>
    <name evidence="1" type="primary">uppP</name>
    <name type="ordered locus">Shewmr4_2900</name>
</gene>
<sequence>MDTFQVIILALIQGLTEFLPISSSAHLILPAQLLGWEDQGLSFDVAVNTGSLFAVVIYFRNELWAMFKAWIASMVKGQHSDDSKLAWWIILATLPAVFFGFIAKDFIETHLRSAGVIAVTTIVFGLLLWWADKMSRRDLTVYQTGWRKALLIGFAQALALIPGTSRSGATMTAALMLGLSRDAAARFSFLMSVPVSLGAAILVGKDLAESPLPIDFQALTLGTVISFVAAYLCIHYFLKIISRMGMTPFVIYRLILGAVLCGFIFL</sequence>
<proteinExistence type="inferred from homology"/>
<reference key="1">
    <citation type="submission" date="2006-08" db="EMBL/GenBank/DDBJ databases">
        <title>Complete sequence of Shewanella sp. MR-4.</title>
        <authorList>
            <consortium name="US DOE Joint Genome Institute"/>
            <person name="Copeland A."/>
            <person name="Lucas S."/>
            <person name="Lapidus A."/>
            <person name="Barry K."/>
            <person name="Detter J.C."/>
            <person name="Glavina del Rio T."/>
            <person name="Hammon N."/>
            <person name="Israni S."/>
            <person name="Dalin E."/>
            <person name="Tice H."/>
            <person name="Pitluck S."/>
            <person name="Kiss H."/>
            <person name="Brettin T."/>
            <person name="Bruce D."/>
            <person name="Han C."/>
            <person name="Tapia R."/>
            <person name="Gilna P."/>
            <person name="Schmutz J."/>
            <person name="Larimer F."/>
            <person name="Land M."/>
            <person name="Hauser L."/>
            <person name="Kyrpides N."/>
            <person name="Mikhailova N."/>
            <person name="Nealson K."/>
            <person name="Konstantinidis K."/>
            <person name="Klappenbach J."/>
            <person name="Tiedje J."/>
            <person name="Richardson P."/>
        </authorList>
    </citation>
    <scope>NUCLEOTIDE SEQUENCE [LARGE SCALE GENOMIC DNA]</scope>
    <source>
        <strain>MR-4</strain>
    </source>
</reference>
<evidence type="ECO:0000255" key="1">
    <source>
        <dbReference type="HAMAP-Rule" id="MF_01006"/>
    </source>
</evidence>
<name>UPPP_SHESM</name>
<feature type="chain" id="PRO_0000290765" description="Undecaprenyl-diphosphatase">
    <location>
        <begin position="1"/>
        <end position="266"/>
    </location>
</feature>
<feature type="transmembrane region" description="Helical" evidence="1">
    <location>
        <begin position="1"/>
        <end position="21"/>
    </location>
</feature>
<feature type="transmembrane region" description="Helical" evidence="1">
    <location>
        <begin position="39"/>
        <end position="59"/>
    </location>
</feature>
<feature type="transmembrane region" description="Helical" evidence="1">
    <location>
        <begin position="87"/>
        <end position="107"/>
    </location>
</feature>
<feature type="transmembrane region" description="Helical" evidence="1">
    <location>
        <begin position="111"/>
        <end position="131"/>
    </location>
</feature>
<feature type="transmembrane region" description="Helical" evidence="1">
    <location>
        <begin position="149"/>
        <end position="169"/>
    </location>
</feature>
<feature type="transmembrane region" description="Helical" evidence="1">
    <location>
        <begin position="183"/>
        <end position="203"/>
    </location>
</feature>
<feature type="transmembrane region" description="Helical" evidence="1">
    <location>
        <begin position="218"/>
        <end position="238"/>
    </location>
</feature>
<feature type="transmembrane region" description="Helical" evidence="1">
    <location>
        <begin position="246"/>
        <end position="266"/>
    </location>
</feature>
<protein>
    <recommendedName>
        <fullName evidence="1">Undecaprenyl-diphosphatase</fullName>
        <ecNumber evidence="1">3.6.1.27</ecNumber>
    </recommendedName>
    <alternativeName>
        <fullName evidence="1">Bacitracin resistance protein</fullName>
    </alternativeName>
    <alternativeName>
        <fullName evidence="1">Undecaprenyl pyrophosphate phosphatase</fullName>
    </alternativeName>
</protein>
<keyword id="KW-0046">Antibiotic resistance</keyword>
<keyword id="KW-0997">Cell inner membrane</keyword>
<keyword id="KW-1003">Cell membrane</keyword>
<keyword id="KW-0133">Cell shape</keyword>
<keyword id="KW-0961">Cell wall biogenesis/degradation</keyword>
<keyword id="KW-0378">Hydrolase</keyword>
<keyword id="KW-0472">Membrane</keyword>
<keyword id="KW-0573">Peptidoglycan synthesis</keyword>
<keyword id="KW-0812">Transmembrane</keyword>
<keyword id="KW-1133">Transmembrane helix</keyword>
<comment type="function">
    <text evidence="1">Catalyzes the dephosphorylation of undecaprenyl diphosphate (UPP). Confers resistance to bacitracin.</text>
</comment>
<comment type="catalytic activity">
    <reaction evidence="1">
        <text>di-trans,octa-cis-undecaprenyl diphosphate + H2O = di-trans,octa-cis-undecaprenyl phosphate + phosphate + H(+)</text>
        <dbReference type="Rhea" id="RHEA:28094"/>
        <dbReference type="ChEBI" id="CHEBI:15377"/>
        <dbReference type="ChEBI" id="CHEBI:15378"/>
        <dbReference type="ChEBI" id="CHEBI:43474"/>
        <dbReference type="ChEBI" id="CHEBI:58405"/>
        <dbReference type="ChEBI" id="CHEBI:60392"/>
        <dbReference type="EC" id="3.6.1.27"/>
    </reaction>
</comment>
<comment type="subcellular location">
    <subcellularLocation>
        <location evidence="1">Cell inner membrane</location>
        <topology evidence="1">Multi-pass membrane protein</topology>
    </subcellularLocation>
</comment>
<comment type="miscellaneous">
    <text>Bacitracin is thought to be involved in the inhibition of peptidoglycan synthesis by sequestering undecaprenyl diphosphate, thereby reducing the pool of lipid carrier available.</text>
</comment>
<comment type="similarity">
    <text evidence="1">Belongs to the UppP family.</text>
</comment>
<organism>
    <name type="scientific">Shewanella sp. (strain MR-4)</name>
    <dbReference type="NCBI Taxonomy" id="60480"/>
    <lineage>
        <taxon>Bacteria</taxon>
        <taxon>Pseudomonadati</taxon>
        <taxon>Pseudomonadota</taxon>
        <taxon>Gammaproteobacteria</taxon>
        <taxon>Alteromonadales</taxon>
        <taxon>Shewanellaceae</taxon>
        <taxon>Shewanella</taxon>
    </lineage>
</organism>
<dbReference type="EC" id="3.6.1.27" evidence="1"/>
<dbReference type="EMBL" id="CP000446">
    <property type="protein sequence ID" value="ABI39971.1"/>
    <property type="molecule type" value="Genomic_DNA"/>
</dbReference>
<dbReference type="RefSeq" id="WP_011623650.1">
    <property type="nucleotide sequence ID" value="NC_008321.1"/>
</dbReference>
<dbReference type="SMR" id="Q0HG46"/>
<dbReference type="KEGG" id="she:Shewmr4_2900"/>
<dbReference type="HOGENOM" id="CLU_060296_1_0_6"/>
<dbReference type="GO" id="GO:0005886">
    <property type="term" value="C:plasma membrane"/>
    <property type="evidence" value="ECO:0007669"/>
    <property type="project" value="UniProtKB-SubCell"/>
</dbReference>
<dbReference type="GO" id="GO:0050380">
    <property type="term" value="F:undecaprenyl-diphosphatase activity"/>
    <property type="evidence" value="ECO:0007669"/>
    <property type="project" value="UniProtKB-UniRule"/>
</dbReference>
<dbReference type="GO" id="GO:0071555">
    <property type="term" value="P:cell wall organization"/>
    <property type="evidence" value="ECO:0007669"/>
    <property type="project" value="UniProtKB-KW"/>
</dbReference>
<dbReference type="GO" id="GO:0009252">
    <property type="term" value="P:peptidoglycan biosynthetic process"/>
    <property type="evidence" value="ECO:0007669"/>
    <property type="project" value="UniProtKB-KW"/>
</dbReference>
<dbReference type="GO" id="GO:0008360">
    <property type="term" value="P:regulation of cell shape"/>
    <property type="evidence" value="ECO:0007669"/>
    <property type="project" value="UniProtKB-KW"/>
</dbReference>
<dbReference type="GO" id="GO:0046677">
    <property type="term" value="P:response to antibiotic"/>
    <property type="evidence" value="ECO:0007669"/>
    <property type="project" value="UniProtKB-UniRule"/>
</dbReference>
<dbReference type="HAMAP" id="MF_01006">
    <property type="entry name" value="Undec_diphosphatase"/>
    <property type="match status" value="1"/>
</dbReference>
<dbReference type="InterPro" id="IPR003824">
    <property type="entry name" value="UppP"/>
</dbReference>
<dbReference type="NCBIfam" id="NF001393">
    <property type="entry name" value="PRK00281.2-4"/>
    <property type="match status" value="1"/>
</dbReference>
<dbReference type="NCBIfam" id="TIGR00753">
    <property type="entry name" value="undec_PP_bacA"/>
    <property type="match status" value="1"/>
</dbReference>
<dbReference type="PANTHER" id="PTHR30622">
    <property type="entry name" value="UNDECAPRENYL-DIPHOSPHATASE"/>
    <property type="match status" value="1"/>
</dbReference>
<dbReference type="PANTHER" id="PTHR30622:SF4">
    <property type="entry name" value="UNDECAPRENYL-DIPHOSPHATASE"/>
    <property type="match status" value="1"/>
</dbReference>
<dbReference type="Pfam" id="PF02673">
    <property type="entry name" value="BacA"/>
    <property type="match status" value="1"/>
</dbReference>